<feature type="chain" id="PRO_1000072981" description="2,3-bisphosphoglycerate-independent phosphoglycerate mutase">
    <location>
        <begin position="1"/>
        <end position="517"/>
    </location>
</feature>
<feature type="active site" description="Phosphoserine intermediate" evidence="1">
    <location>
        <position position="62"/>
    </location>
</feature>
<feature type="binding site" evidence="1">
    <location>
        <position position="12"/>
    </location>
    <ligand>
        <name>Mn(2+)</name>
        <dbReference type="ChEBI" id="CHEBI:29035"/>
        <label>2</label>
    </ligand>
</feature>
<feature type="binding site" evidence="1">
    <location>
        <position position="62"/>
    </location>
    <ligand>
        <name>Mn(2+)</name>
        <dbReference type="ChEBI" id="CHEBI:29035"/>
        <label>2</label>
    </ligand>
</feature>
<feature type="binding site" evidence="1">
    <location>
        <position position="123"/>
    </location>
    <ligand>
        <name>substrate</name>
    </ligand>
</feature>
<feature type="binding site" evidence="1">
    <location>
        <begin position="153"/>
        <end position="154"/>
    </location>
    <ligand>
        <name>substrate</name>
    </ligand>
</feature>
<feature type="binding site" evidence="1">
    <location>
        <position position="185"/>
    </location>
    <ligand>
        <name>substrate</name>
    </ligand>
</feature>
<feature type="binding site" evidence="1">
    <location>
        <position position="191"/>
    </location>
    <ligand>
        <name>substrate</name>
    </ligand>
</feature>
<feature type="binding site" evidence="1">
    <location>
        <begin position="261"/>
        <end position="264"/>
    </location>
    <ligand>
        <name>substrate</name>
    </ligand>
</feature>
<feature type="binding site" evidence="1">
    <location>
        <position position="336"/>
    </location>
    <ligand>
        <name>substrate</name>
    </ligand>
</feature>
<feature type="binding site" evidence="1">
    <location>
        <position position="403"/>
    </location>
    <ligand>
        <name>Mn(2+)</name>
        <dbReference type="ChEBI" id="CHEBI:29035"/>
        <label>1</label>
    </ligand>
</feature>
<feature type="binding site" evidence="1">
    <location>
        <position position="407"/>
    </location>
    <ligand>
        <name>Mn(2+)</name>
        <dbReference type="ChEBI" id="CHEBI:29035"/>
        <label>1</label>
    </ligand>
</feature>
<feature type="binding site" evidence="1">
    <location>
        <position position="444"/>
    </location>
    <ligand>
        <name>Mn(2+)</name>
        <dbReference type="ChEBI" id="CHEBI:29035"/>
        <label>2</label>
    </ligand>
</feature>
<feature type="binding site" evidence="1">
    <location>
        <position position="445"/>
    </location>
    <ligand>
        <name>Mn(2+)</name>
        <dbReference type="ChEBI" id="CHEBI:29035"/>
        <label>2</label>
    </ligand>
</feature>
<feature type="binding site" evidence="1">
    <location>
        <position position="463"/>
    </location>
    <ligand>
        <name>Mn(2+)</name>
        <dbReference type="ChEBI" id="CHEBI:29035"/>
        <label>1</label>
    </ligand>
</feature>
<dbReference type="EC" id="5.4.2.12" evidence="1"/>
<dbReference type="EMBL" id="CP000284">
    <property type="protein sequence ID" value="ABE50455.1"/>
    <property type="molecule type" value="Genomic_DNA"/>
</dbReference>
<dbReference type="RefSeq" id="WP_011480409.1">
    <property type="nucleotide sequence ID" value="NC_007947.1"/>
</dbReference>
<dbReference type="SMR" id="Q1GZ82"/>
<dbReference type="STRING" id="265072.Mfla_2188"/>
<dbReference type="KEGG" id="mfa:Mfla_2188"/>
<dbReference type="eggNOG" id="COG0696">
    <property type="taxonomic scope" value="Bacteria"/>
</dbReference>
<dbReference type="HOGENOM" id="CLU_026099_2_0_4"/>
<dbReference type="OrthoDB" id="9800863at2"/>
<dbReference type="UniPathway" id="UPA00109">
    <property type="reaction ID" value="UER00186"/>
</dbReference>
<dbReference type="Proteomes" id="UP000002440">
    <property type="component" value="Chromosome"/>
</dbReference>
<dbReference type="GO" id="GO:0005829">
    <property type="term" value="C:cytosol"/>
    <property type="evidence" value="ECO:0007669"/>
    <property type="project" value="TreeGrafter"/>
</dbReference>
<dbReference type="GO" id="GO:0030145">
    <property type="term" value="F:manganese ion binding"/>
    <property type="evidence" value="ECO:0007669"/>
    <property type="project" value="UniProtKB-UniRule"/>
</dbReference>
<dbReference type="GO" id="GO:0004619">
    <property type="term" value="F:phosphoglycerate mutase activity"/>
    <property type="evidence" value="ECO:0007669"/>
    <property type="project" value="UniProtKB-EC"/>
</dbReference>
<dbReference type="GO" id="GO:0006007">
    <property type="term" value="P:glucose catabolic process"/>
    <property type="evidence" value="ECO:0007669"/>
    <property type="project" value="InterPro"/>
</dbReference>
<dbReference type="GO" id="GO:0006096">
    <property type="term" value="P:glycolytic process"/>
    <property type="evidence" value="ECO:0007669"/>
    <property type="project" value="UniProtKB-UniRule"/>
</dbReference>
<dbReference type="CDD" id="cd16010">
    <property type="entry name" value="iPGM"/>
    <property type="match status" value="1"/>
</dbReference>
<dbReference type="FunFam" id="3.40.1450.10:FF:000001">
    <property type="entry name" value="2,3-bisphosphoglycerate-independent phosphoglycerate mutase"/>
    <property type="match status" value="1"/>
</dbReference>
<dbReference type="Gene3D" id="3.40.720.10">
    <property type="entry name" value="Alkaline Phosphatase, subunit A"/>
    <property type="match status" value="1"/>
</dbReference>
<dbReference type="Gene3D" id="3.40.1450.10">
    <property type="entry name" value="BPG-independent phosphoglycerate mutase, domain B"/>
    <property type="match status" value="1"/>
</dbReference>
<dbReference type="HAMAP" id="MF_01038">
    <property type="entry name" value="GpmI"/>
    <property type="match status" value="1"/>
</dbReference>
<dbReference type="InterPro" id="IPR017850">
    <property type="entry name" value="Alkaline_phosphatase_core_sf"/>
</dbReference>
<dbReference type="InterPro" id="IPR011258">
    <property type="entry name" value="BPG-indep_PGM_N"/>
</dbReference>
<dbReference type="InterPro" id="IPR006124">
    <property type="entry name" value="Metalloenzyme"/>
</dbReference>
<dbReference type="InterPro" id="IPR036646">
    <property type="entry name" value="PGAM_B_sf"/>
</dbReference>
<dbReference type="InterPro" id="IPR005995">
    <property type="entry name" value="Pgm_bpd_ind"/>
</dbReference>
<dbReference type="NCBIfam" id="TIGR01307">
    <property type="entry name" value="pgm_bpd_ind"/>
    <property type="match status" value="1"/>
</dbReference>
<dbReference type="PANTHER" id="PTHR31637">
    <property type="entry name" value="2,3-BISPHOSPHOGLYCERATE-INDEPENDENT PHOSPHOGLYCERATE MUTASE"/>
    <property type="match status" value="1"/>
</dbReference>
<dbReference type="PANTHER" id="PTHR31637:SF0">
    <property type="entry name" value="2,3-BISPHOSPHOGLYCERATE-INDEPENDENT PHOSPHOGLYCERATE MUTASE"/>
    <property type="match status" value="1"/>
</dbReference>
<dbReference type="Pfam" id="PF06415">
    <property type="entry name" value="iPGM_N"/>
    <property type="match status" value="1"/>
</dbReference>
<dbReference type="Pfam" id="PF01676">
    <property type="entry name" value="Metalloenzyme"/>
    <property type="match status" value="1"/>
</dbReference>
<dbReference type="PIRSF" id="PIRSF001492">
    <property type="entry name" value="IPGAM"/>
    <property type="match status" value="1"/>
</dbReference>
<dbReference type="SUPFAM" id="SSF64158">
    <property type="entry name" value="2,3-Bisphosphoglycerate-independent phosphoglycerate mutase, substrate-binding domain"/>
    <property type="match status" value="1"/>
</dbReference>
<dbReference type="SUPFAM" id="SSF53649">
    <property type="entry name" value="Alkaline phosphatase-like"/>
    <property type="match status" value="1"/>
</dbReference>
<gene>
    <name evidence="1" type="primary">gpmI</name>
    <name type="ordered locus">Mfla_2188</name>
</gene>
<protein>
    <recommendedName>
        <fullName evidence="1">2,3-bisphosphoglycerate-independent phosphoglycerate mutase</fullName>
        <shortName evidence="1">BPG-independent PGAM</shortName>
        <shortName evidence="1">Phosphoglyceromutase</shortName>
        <shortName evidence="1">iPGM</shortName>
        <ecNumber evidence="1">5.4.2.12</ecNumber>
    </recommendedName>
</protein>
<evidence type="ECO:0000255" key="1">
    <source>
        <dbReference type="HAMAP-Rule" id="MF_01038"/>
    </source>
</evidence>
<name>GPMI_METFK</name>
<proteinExistence type="inferred from homology"/>
<organism>
    <name type="scientific">Methylobacillus flagellatus (strain ATCC 51484 / DSM 6875 / VKM B-1610 / KT)</name>
    <dbReference type="NCBI Taxonomy" id="265072"/>
    <lineage>
        <taxon>Bacteria</taxon>
        <taxon>Pseudomonadati</taxon>
        <taxon>Pseudomonadota</taxon>
        <taxon>Betaproteobacteria</taxon>
        <taxon>Nitrosomonadales</taxon>
        <taxon>Methylophilaceae</taxon>
        <taxon>Methylobacillus</taxon>
    </lineage>
</organism>
<keyword id="KW-0324">Glycolysis</keyword>
<keyword id="KW-0413">Isomerase</keyword>
<keyword id="KW-0464">Manganese</keyword>
<keyword id="KW-0479">Metal-binding</keyword>
<keyword id="KW-1185">Reference proteome</keyword>
<reference key="1">
    <citation type="submission" date="2006-03" db="EMBL/GenBank/DDBJ databases">
        <title>Complete sequence of Methylobacillus flagellatus KT.</title>
        <authorList>
            <consortium name="US DOE Joint Genome Institute"/>
            <person name="Copeland A."/>
            <person name="Lucas S."/>
            <person name="Lapidus A."/>
            <person name="Barry K."/>
            <person name="Detter J.C."/>
            <person name="Glavina del Rio T."/>
            <person name="Hammon N."/>
            <person name="Israni S."/>
            <person name="Dalin E."/>
            <person name="Tice H."/>
            <person name="Pitluck S."/>
            <person name="Brettin T."/>
            <person name="Bruce D."/>
            <person name="Han C."/>
            <person name="Tapia R."/>
            <person name="Saunders E."/>
            <person name="Gilna P."/>
            <person name="Schmutz J."/>
            <person name="Larimer F."/>
            <person name="Land M."/>
            <person name="Kyrpides N."/>
            <person name="Anderson I."/>
            <person name="Richardson P."/>
        </authorList>
    </citation>
    <scope>NUCLEOTIDE SEQUENCE [LARGE SCALE GENOMIC DNA]</scope>
    <source>
        <strain>ATCC 51484 / DSM 6875 / VKM B-1610 / KT</strain>
    </source>
</reference>
<sequence length="517" mass="56632">MTVTPALLVILDGFGYREDSHDNAIALANTPNIDRFWTQYPHTLINASETFVGLPRGQMGNSEVGHLNIGAGRVVFQDFERINQAIASREFFSNPVLIEAVNKAKAGHKAVHILGLLSDGGVHSHQDHIHATIEMAVNAGVEKVYVHAFLDGRDTPPISAKPYLEKLEQACASIGGGKIASICGRFYAMDRDKRWPRVEAAYNLITDGQGEFASASALQGLEAAYARDEKDEFVKATAIAAAGEQPVTMEDGDVVIFVNFRSDRARQLTHALLDPDFEGFNRRRQPKLAGFYTLTLYDKAETRAKPIFAPVEIRNTFGEYVAQHGLKQLRIAETEKYPHVTFFFNGGEEQVFAGEDRILVPSPKVATYDLQPEMSAYEVTDRLEAAILSRKYDAIICNYANCDMVGHSGDLSASIKAVETIDTCIARIVKAMESIGGQMIITADHGNVEQMRDYENNQPHTQHTTNQVPLFFIGKPATLAAPGTGSLCDLAPSLLAMMGLKQPPEMTGKSLVAFQAA</sequence>
<comment type="function">
    <text evidence="1">Catalyzes the interconversion of 2-phosphoglycerate and 3-phosphoglycerate.</text>
</comment>
<comment type="catalytic activity">
    <reaction evidence="1">
        <text>(2R)-2-phosphoglycerate = (2R)-3-phosphoglycerate</text>
        <dbReference type="Rhea" id="RHEA:15901"/>
        <dbReference type="ChEBI" id="CHEBI:58272"/>
        <dbReference type="ChEBI" id="CHEBI:58289"/>
        <dbReference type="EC" id="5.4.2.12"/>
    </reaction>
</comment>
<comment type="cofactor">
    <cofactor evidence="1">
        <name>Mn(2+)</name>
        <dbReference type="ChEBI" id="CHEBI:29035"/>
    </cofactor>
    <text evidence="1">Binds 2 manganese ions per subunit.</text>
</comment>
<comment type="pathway">
    <text evidence="1">Carbohydrate degradation; glycolysis; pyruvate from D-glyceraldehyde 3-phosphate: step 3/5.</text>
</comment>
<comment type="subunit">
    <text evidence="1">Monomer.</text>
</comment>
<comment type="similarity">
    <text evidence="1">Belongs to the BPG-independent phosphoglycerate mutase family.</text>
</comment>
<accession>Q1GZ82</accession>